<gene>
    <name evidence="1" type="primary">codY</name>
    <name type="ordered locus">NWMN_1165</name>
</gene>
<reference key="1">
    <citation type="journal article" date="2008" name="J. Bacteriol.">
        <title>Genome sequence of Staphylococcus aureus strain Newman and comparative analysis of staphylococcal genomes: polymorphism and evolution of two major pathogenicity islands.</title>
        <authorList>
            <person name="Baba T."/>
            <person name="Bae T."/>
            <person name="Schneewind O."/>
            <person name="Takeuchi F."/>
            <person name="Hiramatsu K."/>
        </authorList>
    </citation>
    <scope>NUCLEOTIDE SEQUENCE [LARGE SCALE GENOMIC DNA]</scope>
    <source>
        <strain>Newman</strain>
    </source>
</reference>
<accession>A6QGF5</accession>
<feature type="chain" id="PRO_1000072656" description="Global transcriptional regulator CodY">
    <location>
        <begin position="1"/>
        <end position="257"/>
    </location>
</feature>
<feature type="DNA-binding region" description="H-T-H motif" evidence="1">
    <location>
        <begin position="203"/>
        <end position="222"/>
    </location>
</feature>
<feature type="region of interest" description="GAF domain" evidence="1">
    <location>
        <begin position="1"/>
        <end position="155"/>
    </location>
</feature>
<name>CODY_STAAE</name>
<sequence length="257" mass="28755">MSLLSKTRELNTLLQKHKGIAVDFKDVAQTISSVTVTNVFIVSRRGKILGSSLNELLKSQRIIQMLEERHIPSEYTERLMEVKQTESNIDIDNVLTVFPPENRELFIDSRTTIFPILGGGERLGTLVLGRVHDDFNENDLVLGEYAATVIGMEILREKHSEVEKEARDKAAITMAINSLSYSEKEAIEHIFEELGGTEGLLIASKVADRVGITRSVIVNALRKLESAGVIESRSLGMKGTFIKVKKEKFLDELEKSK</sequence>
<dbReference type="EMBL" id="AP009351">
    <property type="protein sequence ID" value="BAF67437.1"/>
    <property type="molecule type" value="Genomic_DNA"/>
</dbReference>
<dbReference type="RefSeq" id="WP_000055337.1">
    <property type="nucleotide sequence ID" value="NZ_JBBIAE010000001.1"/>
</dbReference>
<dbReference type="SMR" id="A6QGF5"/>
<dbReference type="KEGG" id="sae:NWMN_1165"/>
<dbReference type="HOGENOM" id="CLU_089581_0_0_9"/>
<dbReference type="Proteomes" id="UP000006386">
    <property type="component" value="Chromosome"/>
</dbReference>
<dbReference type="GO" id="GO:0005737">
    <property type="term" value="C:cytoplasm"/>
    <property type="evidence" value="ECO:0007669"/>
    <property type="project" value="UniProtKB-SubCell"/>
</dbReference>
<dbReference type="GO" id="GO:0003677">
    <property type="term" value="F:DNA binding"/>
    <property type="evidence" value="ECO:0007669"/>
    <property type="project" value="UniProtKB-UniRule"/>
</dbReference>
<dbReference type="GO" id="GO:0003700">
    <property type="term" value="F:DNA-binding transcription factor activity"/>
    <property type="evidence" value="ECO:0007669"/>
    <property type="project" value="InterPro"/>
</dbReference>
<dbReference type="GO" id="GO:0005525">
    <property type="term" value="F:GTP binding"/>
    <property type="evidence" value="ECO:0007669"/>
    <property type="project" value="InterPro"/>
</dbReference>
<dbReference type="GO" id="GO:0045892">
    <property type="term" value="P:negative regulation of DNA-templated transcription"/>
    <property type="evidence" value="ECO:0007669"/>
    <property type="project" value="UniProtKB-UniRule"/>
</dbReference>
<dbReference type="FunFam" id="1.10.10.10:FF:000034">
    <property type="entry name" value="GTP-sensing transcriptional pleiotropic repressor CodY"/>
    <property type="match status" value="1"/>
</dbReference>
<dbReference type="FunFam" id="3.30.450.40:FF:000003">
    <property type="entry name" value="GTP-sensing transcriptional pleiotropic repressor CodY"/>
    <property type="match status" value="1"/>
</dbReference>
<dbReference type="Gene3D" id="3.30.450.40">
    <property type="match status" value="1"/>
</dbReference>
<dbReference type="Gene3D" id="1.10.10.10">
    <property type="entry name" value="Winged helix-like DNA-binding domain superfamily/Winged helix DNA-binding domain"/>
    <property type="match status" value="1"/>
</dbReference>
<dbReference type="HAMAP" id="MF_00621">
    <property type="entry name" value="HTH_type_CodY"/>
    <property type="match status" value="1"/>
</dbReference>
<dbReference type="InterPro" id="IPR014154">
    <property type="entry name" value="CodY"/>
</dbReference>
<dbReference type="InterPro" id="IPR029016">
    <property type="entry name" value="GAF-like_dom_sf"/>
</dbReference>
<dbReference type="InterPro" id="IPR013198">
    <property type="entry name" value="GTP_trans_reg_CodY_C"/>
</dbReference>
<dbReference type="InterPro" id="IPR010312">
    <property type="entry name" value="Transc_reg_CodY_N"/>
</dbReference>
<dbReference type="InterPro" id="IPR036388">
    <property type="entry name" value="WH-like_DNA-bd_sf"/>
</dbReference>
<dbReference type="InterPro" id="IPR036390">
    <property type="entry name" value="WH_DNA-bd_sf"/>
</dbReference>
<dbReference type="NCBIfam" id="TIGR02787">
    <property type="entry name" value="codY_Gpos"/>
    <property type="match status" value="1"/>
</dbReference>
<dbReference type="NCBIfam" id="NF003170">
    <property type="entry name" value="PRK04158.1"/>
    <property type="match status" value="1"/>
</dbReference>
<dbReference type="PANTHER" id="PTHR40062:SF1">
    <property type="entry name" value="GLOBAL TRANSCRIPTIONAL REGULATOR CODY"/>
    <property type="match status" value="1"/>
</dbReference>
<dbReference type="PANTHER" id="PTHR40062">
    <property type="entry name" value="GTP-SENSING TRANSCRIPTIONAL PLEIOTROPIC REPRESSOR CODY"/>
    <property type="match status" value="1"/>
</dbReference>
<dbReference type="Pfam" id="PF06018">
    <property type="entry name" value="CodY"/>
    <property type="match status" value="1"/>
</dbReference>
<dbReference type="Pfam" id="PF08222">
    <property type="entry name" value="HTH_CodY"/>
    <property type="match status" value="1"/>
</dbReference>
<dbReference type="PIRSF" id="PIRSF011572">
    <property type="entry name" value="GTP_sensing_CodY"/>
    <property type="match status" value="1"/>
</dbReference>
<dbReference type="SUPFAM" id="SSF46785">
    <property type="entry name" value="Winged helix' DNA-binding domain"/>
    <property type="match status" value="1"/>
</dbReference>
<organism>
    <name type="scientific">Staphylococcus aureus (strain Newman)</name>
    <dbReference type="NCBI Taxonomy" id="426430"/>
    <lineage>
        <taxon>Bacteria</taxon>
        <taxon>Bacillati</taxon>
        <taxon>Bacillota</taxon>
        <taxon>Bacilli</taxon>
        <taxon>Bacillales</taxon>
        <taxon>Staphylococcaceae</taxon>
        <taxon>Staphylococcus</taxon>
    </lineage>
</organism>
<protein>
    <recommendedName>
        <fullName evidence="1">Global transcriptional regulator CodY</fullName>
    </recommendedName>
</protein>
<proteinExistence type="inferred from homology"/>
<keyword id="KW-0963">Cytoplasm</keyword>
<keyword id="KW-0238">DNA-binding</keyword>
<keyword id="KW-0678">Repressor</keyword>
<keyword id="KW-0804">Transcription</keyword>
<keyword id="KW-0805">Transcription regulation</keyword>
<evidence type="ECO:0000255" key="1">
    <source>
        <dbReference type="HAMAP-Rule" id="MF_00621"/>
    </source>
</evidence>
<comment type="function">
    <text evidence="1">DNA-binding global transcriptional regulator which is involved in the adaptive response to starvation and acts by directly or indirectly controlling the expression of numerous genes in response to nutrient availability. During rapid exponential growth, CodY is highly active and represses genes whose products allow adaptation to nutrient depletion.</text>
</comment>
<comment type="subcellular location">
    <subcellularLocation>
        <location evidence="1">Cytoplasm</location>
    </subcellularLocation>
</comment>
<comment type="similarity">
    <text evidence="1">Belongs to the CodY family.</text>
</comment>